<dbReference type="EMBL" id="EU926088">
    <property type="protein sequence ID" value="ACI41420.1"/>
    <property type="molecule type" value="mRNA"/>
</dbReference>
<dbReference type="EMBL" id="FM864092">
    <property type="protein sequence ID" value="CAS03689.1"/>
    <property type="molecule type" value="mRNA"/>
</dbReference>
<dbReference type="SMR" id="B6DD04"/>
<dbReference type="ArachnoServer" id="AS001025">
    <property type="toxin name" value="U10-lycotoxin-Ls1a"/>
</dbReference>
<dbReference type="GO" id="GO:0005576">
    <property type="term" value="C:extracellular region"/>
    <property type="evidence" value="ECO:0007669"/>
    <property type="project" value="UniProtKB-SubCell"/>
</dbReference>
<dbReference type="GO" id="GO:0008200">
    <property type="term" value="F:ion channel inhibitor activity"/>
    <property type="evidence" value="ECO:0007669"/>
    <property type="project" value="InterPro"/>
</dbReference>
<dbReference type="GO" id="GO:0090729">
    <property type="term" value="F:toxin activity"/>
    <property type="evidence" value="ECO:0007669"/>
    <property type="project" value="UniProtKB-KW"/>
</dbReference>
<dbReference type="CDD" id="cd12960">
    <property type="entry name" value="Spider_toxin"/>
    <property type="match status" value="1"/>
</dbReference>
<dbReference type="InterPro" id="IPR019553">
    <property type="entry name" value="Spider_toxin_CSTX_knottin"/>
</dbReference>
<dbReference type="InterPro" id="IPR004169">
    <property type="entry name" value="Spidertoxin"/>
</dbReference>
<dbReference type="Pfam" id="PF10530">
    <property type="entry name" value="Toxin_35"/>
    <property type="match status" value="1"/>
</dbReference>
<feature type="signal peptide" evidence="2">
    <location>
        <begin position="1"/>
        <end position="20"/>
    </location>
</feature>
<feature type="propeptide" id="PRO_0000401825" evidence="1">
    <location>
        <begin position="21"/>
        <end position="26"/>
    </location>
</feature>
<feature type="chain" id="PRO_0000401826" description="U10-lycotoxin-Ls1a">
    <location>
        <begin position="27"/>
        <end position="77"/>
    </location>
</feature>
<proteinExistence type="evidence at transcript level"/>
<keyword id="KW-1015">Disulfide bond</keyword>
<keyword id="KW-0964">Secreted</keyword>
<keyword id="KW-0732">Signal</keyword>
<keyword id="KW-0800">Toxin</keyword>
<reference key="1">
    <citation type="journal article" date="2010" name="Zoology">
        <title>Transcriptome analysis of the venom glands of the Chinese wolf spider Lycosa singoriensis.</title>
        <authorList>
            <person name="Zhang Y."/>
            <person name="Chen J."/>
            <person name="Tang X."/>
            <person name="Wang F."/>
            <person name="Jiang L."/>
            <person name="Xiong X."/>
            <person name="Wang M."/>
            <person name="Rong M."/>
            <person name="Liu Z."/>
            <person name="Liang S."/>
        </authorList>
    </citation>
    <scope>NUCLEOTIDE SEQUENCE [LARGE SCALE MRNA]</scope>
    <source>
        <tissue>Venom gland</tissue>
    </source>
</reference>
<name>TXA02_LYCSI</name>
<comment type="subcellular location">
    <subcellularLocation>
        <location evidence="1">Secreted</location>
    </subcellularLocation>
</comment>
<comment type="tissue specificity">
    <text>Expressed by the venom gland.</text>
</comment>
<comment type="PTM">
    <text evidence="1">Contains 4 disulfide bonds.</text>
</comment>
<comment type="similarity">
    <text evidence="3">Belongs to the neurotoxin 19 (CSTX) family. 09 (U10-Lctx) subfamily.</text>
</comment>
<sequence>MKLIIFTGLVLFAIVSLIEAEEESGRVCIPLNGECSKSPDKCCDNINCDCYLRFEKGVQTGRPCFCTEKDVIFERDE</sequence>
<protein>
    <recommendedName>
        <fullName>U10-lycotoxin-Ls1a</fullName>
    </recommendedName>
    <alternativeName>
        <fullName>Toxin-like structure LSTX-J2</fullName>
    </alternativeName>
</protein>
<evidence type="ECO:0000250" key="1"/>
<evidence type="ECO:0000255" key="2"/>
<evidence type="ECO:0000305" key="3"/>
<accession>B6DD04</accession>
<organism>
    <name type="scientific">Lycosa singoriensis</name>
    <name type="common">Wolf spider</name>
    <name type="synonym">Aranea singoriensis</name>
    <dbReference type="NCBI Taxonomy" id="434756"/>
    <lineage>
        <taxon>Eukaryota</taxon>
        <taxon>Metazoa</taxon>
        <taxon>Ecdysozoa</taxon>
        <taxon>Arthropoda</taxon>
        <taxon>Chelicerata</taxon>
        <taxon>Arachnida</taxon>
        <taxon>Araneae</taxon>
        <taxon>Araneomorphae</taxon>
        <taxon>Entelegynae</taxon>
        <taxon>Lycosoidea</taxon>
        <taxon>Lycosidae</taxon>
        <taxon>Lycosa</taxon>
    </lineage>
</organism>